<comment type="function">
    <text evidence="1">Core subunit of the mitochondrial membrane respiratory chain NADH dehydrogenase (Complex I) that is believed to belong to the minimal assembly required for catalysis. Complex I functions in the transfer of electrons from NADH to the respiratory chain. The immediate electron acceptor for the enzyme is believed to be ubiquinone (By similarity).</text>
</comment>
<comment type="catalytic activity">
    <reaction>
        <text>a ubiquinone + NADH + 5 H(+)(in) = a ubiquinol + NAD(+) + 4 H(+)(out)</text>
        <dbReference type="Rhea" id="RHEA:29091"/>
        <dbReference type="Rhea" id="RHEA-COMP:9565"/>
        <dbReference type="Rhea" id="RHEA-COMP:9566"/>
        <dbReference type="ChEBI" id="CHEBI:15378"/>
        <dbReference type="ChEBI" id="CHEBI:16389"/>
        <dbReference type="ChEBI" id="CHEBI:17976"/>
        <dbReference type="ChEBI" id="CHEBI:57540"/>
        <dbReference type="ChEBI" id="CHEBI:57945"/>
        <dbReference type="EC" id="7.1.1.2"/>
    </reaction>
</comment>
<comment type="subunit">
    <text evidence="1">Complex I is composed of about 45 different subunits.</text>
</comment>
<comment type="subcellular location">
    <subcellularLocation>
        <location evidence="3">Mitochondrion membrane</location>
        <topology evidence="3">Multi-pass membrane protein</topology>
    </subcellularLocation>
</comment>
<comment type="RNA editing" locationType="Undetermined">
    <text evidence="4">Comparison to ND6 from other plants suggests this may be subjected to RNA editing.</text>
</comment>
<comment type="similarity">
    <text evidence="3">Belongs to the complex I subunit 6 family.</text>
</comment>
<reference key="1">
    <citation type="journal article" date="1993" name="Curr. Genet.">
        <title>Characterization of the Brassica campestris mitochondrial gene for subunit six of NADH dehydrogenase: nad6 is present in the mitochondrion of a wide range of flowering plants.</title>
        <authorList>
            <person name="Nugent J.M."/>
            <person name="Palmer J.D."/>
        </authorList>
    </citation>
    <scope>NUCLEOTIDE SEQUENCE [GENOMIC DNA]</scope>
    <scope>RNA EDITING</scope>
</reference>
<proteinExistence type="evidence at transcript level"/>
<organism>
    <name type="scientific">Brassica campestris</name>
    <name type="common">Field mustard</name>
    <dbReference type="NCBI Taxonomy" id="3711"/>
    <lineage>
        <taxon>Eukaryota</taxon>
        <taxon>Viridiplantae</taxon>
        <taxon>Streptophyta</taxon>
        <taxon>Embryophyta</taxon>
        <taxon>Tracheophyta</taxon>
        <taxon>Spermatophyta</taxon>
        <taxon>Magnoliopsida</taxon>
        <taxon>eudicotyledons</taxon>
        <taxon>Gunneridae</taxon>
        <taxon>Pentapetalae</taxon>
        <taxon>rosids</taxon>
        <taxon>malvids</taxon>
        <taxon>Brassicales</taxon>
        <taxon>Brassicaceae</taxon>
        <taxon>Brassiceae</taxon>
        <taxon>Brassica</taxon>
    </lineage>
</organism>
<keyword id="KW-0249">Electron transport</keyword>
<keyword id="KW-0472">Membrane</keyword>
<keyword id="KW-0496">Mitochondrion</keyword>
<keyword id="KW-0520">NAD</keyword>
<keyword id="KW-1185">Reference proteome</keyword>
<keyword id="KW-0679">Respiratory chain</keyword>
<keyword id="KW-0691">RNA editing</keyword>
<keyword id="KW-1278">Translocase</keyword>
<keyword id="KW-0812">Transmembrane</keyword>
<keyword id="KW-1133">Transmembrane helix</keyword>
<keyword id="KW-0813">Transport</keyword>
<keyword id="KW-0830">Ubiquinone</keyword>
<protein>
    <recommendedName>
        <fullName>NADH-ubiquinone oxidoreductase chain 6</fullName>
        <ecNumber>7.1.1.2</ecNumber>
    </recommendedName>
    <alternativeName>
        <fullName>NADH dehydrogenase subunit 6</fullName>
    </alternativeName>
</protein>
<feature type="chain" id="PRO_0000118251" description="NADH-ubiquinone oxidoreductase chain 6">
    <location>
        <begin position="1"/>
        <end position="205"/>
    </location>
</feature>
<feature type="transmembrane region" description="Helical" evidence="2">
    <location>
        <begin position="48"/>
        <end position="68"/>
    </location>
</feature>
<feature type="transmembrane region" description="Helical" evidence="2">
    <location>
        <begin position="86"/>
        <end position="106"/>
    </location>
</feature>
<feature type="transmembrane region" description="Helical" evidence="2">
    <location>
        <begin position="150"/>
        <end position="170"/>
    </location>
</feature>
<evidence type="ECO:0000250" key="1"/>
<evidence type="ECO:0000255" key="2"/>
<evidence type="ECO:0000305" key="3"/>
<evidence type="ECO:0000305" key="4">
    <source>
    </source>
</evidence>
<name>NU6M_BRACM</name>
<sequence length="205" mass="23494">MILSVLSSPALVSGLMVARAKNPVHSVLFPIPVFRDTSGLLLLLGLDFFAMIFPVVHIGAIAVSFLFVVMMFHIQIAEIHEEVLRYLPVSGIIGLIFWWEMFFILDNESIPLLPTQRNTTSLRYTVYAGKVRSWTNLETLGNLLYTYYSVWFLVPSLILLVAMIGAIVLTMHRTTKVKRQDVFRRNAIDFRRTIMRRTTDPLTIY</sequence>
<accession>P60498</accession>
<accession>Q01825</accession>
<gene>
    <name type="primary">ND6</name>
    <name type="synonym">NAD6</name>
</gene>
<geneLocation type="mitochondrion"/>
<dbReference type="EC" id="7.1.1.2"/>
<dbReference type="EMBL" id="X68256">
    <property type="protein sequence ID" value="CAA48326.1"/>
    <property type="molecule type" value="Genomic_DNA"/>
</dbReference>
<dbReference type="PIR" id="S28919">
    <property type="entry name" value="S28919"/>
</dbReference>
<dbReference type="SMR" id="P60498"/>
<dbReference type="Proteomes" id="UP000011750">
    <property type="component" value="Unplaced"/>
</dbReference>
<dbReference type="GO" id="GO:0031966">
    <property type="term" value="C:mitochondrial membrane"/>
    <property type="evidence" value="ECO:0007669"/>
    <property type="project" value="UniProtKB-SubCell"/>
</dbReference>
<dbReference type="GO" id="GO:0008137">
    <property type="term" value="F:NADH dehydrogenase (ubiquinone) activity"/>
    <property type="evidence" value="ECO:0007669"/>
    <property type="project" value="UniProtKB-EC"/>
</dbReference>
<dbReference type="FunFam" id="1.20.120.1200:FF:000003">
    <property type="entry name" value="NADH-ubiquinone oxidoreductase chain 6"/>
    <property type="match status" value="1"/>
</dbReference>
<dbReference type="Gene3D" id="1.20.120.1200">
    <property type="entry name" value="NADH-ubiquinone/plastoquinone oxidoreductase chain 6, subunit NuoJ"/>
    <property type="match status" value="1"/>
</dbReference>
<dbReference type="InterPro" id="IPR001457">
    <property type="entry name" value="NADH_UbQ/plastoQ_OxRdtase_su6"/>
</dbReference>
<dbReference type="InterPro" id="IPR042106">
    <property type="entry name" value="Nuo/plastoQ_OxRdtase_6_NuoJ"/>
</dbReference>
<dbReference type="NCBIfam" id="NF005164">
    <property type="entry name" value="PRK06638.1-4"/>
    <property type="match status" value="1"/>
</dbReference>
<dbReference type="PANTHER" id="PTHR33269">
    <property type="entry name" value="NADH-UBIQUINONE OXIDOREDUCTASE CHAIN 6"/>
    <property type="match status" value="1"/>
</dbReference>
<dbReference type="PANTHER" id="PTHR33269:SF17">
    <property type="entry name" value="NADH-UBIQUINONE OXIDOREDUCTASE CHAIN 6"/>
    <property type="match status" value="1"/>
</dbReference>
<dbReference type="Pfam" id="PF00499">
    <property type="entry name" value="Oxidored_q3"/>
    <property type="match status" value="1"/>
</dbReference>